<gene>
    <name type="ordered locus">TC_0628</name>
</gene>
<keyword id="KW-0963">Cytoplasm</keyword>
<keyword id="KW-0378">Hydrolase</keyword>
<keyword id="KW-0546">Nucleotide metabolism</keyword>
<organism>
    <name type="scientific">Chlamydia muridarum (strain MoPn / Nigg)</name>
    <dbReference type="NCBI Taxonomy" id="243161"/>
    <lineage>
        <taxon>Bacteria</taxon>
        <taxon>Pseudomonadati</taxon>
        <taxon>Chlamydiota</taxon>
        <taxon>Chlamydiia</taxon>
        <taxon>Chlamydiales</taxon>
        <taxon>Chlamydiaceae</taxon>
        <taxon>Chlamydia/Chlamydophila group</taxon>
        <taxon>Chlamydia</taxon>
    </lineage>
</organism>
<protein>
    <recommendedName>
        <fullName evidence="1">Nucleoside triphosphate pyrophosphatase</fullName>
        <ecNumber evidence="1">3.6.1.9</ecNumber>
    </recommendedName>
    <alternativeName>
        <fullName evidence="1">Nucleotide pyrophosphatase</fullName>
        <shortName evidence="1">Nucleotide PPase</shortName>
    </alternativeName>
</protein>
<dbReference type="EC" id="3.6.1.9" evidence="1"/>
<dbReference type="EMBL" id="AE002160">
    <property type="protein sequence ID" value="AAF39457.1"/>
    <property type="molecule type" value="Genomic_DNA"/>
</dbReference>
<dbReference type="PIR" id="H81681">
    <property type="entry name" value="H81681"/>
</dbReference>
<dbReference type="RefSeq" id="WP_010231054.1">
    <property type="nucleotide sequence ID" value="NZ_CP063055.1"/>
</dbReference>
<dbReference type="SMR" id="Q9PK45"/>
<dbReference type="GeneID" id="1245988"/>
<dbReference type="KEGG" id="cmu:TC_0628"/>
<dbReference type="eggNOG" id="COG0424">
    <property type="taxonomic scope" value="Bacteria"/>
</dbReference>
<dbReference type="HOGENOM" id="CLU_040416_0_0_0"/>
<dbReference type="OrthoDB" id="9807767at2"/>
<dbReference type="Proteomes" id="UP000000800">
    <property type="component" value="Chromosome"/>
</dbReference>
<dbReference type="GO" id="GO:0005737">
    <property type="term" value="C:cytoplasm"/>
    <property type="evidence" value="ECO:0007669"/>
    <property type="project" value="UniProtKB-SubCell"/>
</dbReference>
<dbReference type="GO" id="GO:0047429">
    <property type="term" value="F:nucleoside triphosphate diphosphatase activity"/>
    <property type="evidence" value="ECO:0007669"/>
    <property type="project" value="UniProtKB-EC"/>
</dbReference>
<dbReference type="GO" id="GO:0009117">
    <property type="term" value="P:nucleotide metabolic process"/>
    <property type="evidence" value="ECO:0007669"/>
    <property type="project" value="UniProtKB-KW"/>
</dbReference>
<dbReference type="CDD" id="cd00555">
    <property type="entry name" value="Maf"/>
    <property type="match status" value="1"/>
</dbReference>
<dbReference type="Gene3D" id="3.90.950.10">
    <property type="match status" value="1"/>
</dbReference>
<dbReference type="HAMAP" id="MF_00528">
    <property type="entry name" value="Maf"/>
    <property type="match status" value="1"/>
</dbReference>
<dbReference type="InterPro" id="IPR029001">
    <property type="entry name" value="ITPase-like_fam"/>
</dbReference>
<dbReference type="InterPro" id="IPR003697">
    <property type="entry name" value="Maf-like"/>
</dbReference>
<dbReference type="NCBIfam" id="TIGR00172">
    <property type="entry name" value="maf"/>
    <property type="match status" value="1"/>
</dbReference>
<dbReference type="PANTHER" id="PTHR43213">
    <property type="entry name" value="BIFUNCTIONAL DTTP/UTP PYROPHOSPHATASE/METHYLTRANSFERASE PROTEIN-RELATED"/>
    <property type="match status" value="1"/>
</dbReference>
<dbReference type="PANTHER" id="PTHR43213:SF5">
    <property type="entry name" value="BIFUNCTIONAL DTTP_UTP PYROPHOSPHATASE_METHYLTRANSFERASE PROTEIN-RELATED"/>
    <property type="match status" value="1"/>
</dbReference>
<dbReference type="Pfam" id="PF02545">
    <property type="entry name" value="Maf"/>
    <property type="match status" value="1"/>
</dbReference>
<dbReference type="PIRSF" id="PIRSF006305">
    <property type="entry name" value="Maf"/>
    <property type="match status" value="1"/>
</dbReference>
<dbReference type="SUPFAM" id="SSF52972">
    <property type="entry name" value="ITPase-like"/>
    <property type="match status" value="1"/>
</dbReference>
<proteinExistence type="inferred from homology"/>
<name>NTPP_CHLMU</name>
<reference key="1">
    <citation type="journal article" date="2000" name="Nucleic Acids Res.">
        <title>Genome sequences of Chlamydia trachomatis MoPn and Chlamydia pneumoniae AR39.</title>
        <authorList>
            <person name="Read T.D."/>
            <person name="Brunham R.C."/>
            <person name="Shen C."/>
            <person name="Gill S.R."/>
            <person name="Heidelberg J.F."/>
            <person name="White O."/>
            <person name="Hickey E.K."/>
            <person name="Peterson J.D."/>
            <person name="Utterback T.R."/>
            <person name="Berry K.J."/>
            <person name="Bass S."/>
            <person name="Linher K.D."/>
            <person name="Weidman J.F."/>
            <person name="Khouri H.M."/>
            <person name="Craven B."/>
            <person name="Bowman C."/>
            <person name="Dodson R.J."/>
            <person name="Gwinn M.L."/>
            <person name="Nelson W.C."/>
            <person name="DeBoy R.T."/>
            <person name="Kolonay J.F."/>
            <person name="McClarty G."/>
            <person name="Salzberg S.L."/>
            <person name="Eisen J.A."/>
            <person name="Fraser C.M."/>
        </authorList>
    </citation>
    <scope>NUCLEOTIDE SEQUENCE [LARGE SCALE GENOMIC DNA]</scope>
    <source>
        <strain>MoPn / Nigg</strain>
    </source>
</reference>
<comment type="function">
    <text evidence="1">Nucleoside triphosphate pyrophosphatase. May have a dual role in cell division arrest and in preventing the incorporation of modified nucleotides into cellular nucleic acids.</text>
</comment>
<comment type="catalytic activity">
    <reaction evidence="1">
        <text>a ribonucleoside 5'-triphosphate + H2O = a ribonucleoside 5'-phosphate + diphosphate + H(+)</text>
        <dbReference type="Rhea" id="RHEA:23996"/>
        <dbReference type="ChEBI" id="CHEBI:15377"/>
        <dbReference type="ChEBI" id="CHEBI:15378"/>
        <dbReference type="ChEBI" id="CHEBI:33019"/>
        <dbReference type="ChEBI" id="CHEBI:58043"/>
        <dbReference type="ChEBI" id="CHEBI:61557"/>
        <dbReference type="EC" id="3.6.1.9"/>
    </reaction>
</comment>
<comment type="catalytic activity">
    <reaction evidence="1">
        <text>a 2'-deoxyribonucleoside 5'-triphosphate + H2O = a 2'-deoxyribonucleoside 5'-phosphate + diphosphate + H(+)</text>
        <dbReference type="Rhea" id="RHEA:44644"/>
        <dbReference type="ChEBI" id="CHEBI:15377"/>
        <dbReference type="ChEBI" id="CHEBI:15378"/>
        <dbReference type="ChEBI" id="CHEBI:33019"/>
        <dbReference type="ChEBI" id="CHEBI:61560"/>
        <dbReference type="ChEBI" id="CHEBI:65317"/>
        <dbReference type="EC" id="3.6.1.9"/>
    </reaction>
</comment>
<comment type="cofactor">
    <cofactor evidence="1">
        <name>a divalent metal cation</name>
        <dbReference type="ChEBI" id="CHEBI:60240"/>
    </cofactor>
</comment>
<comment type="subcellular location">
    <subcellularLocation>
        <location evidence="1">Cytoplasm</location>
    </subcellularLocation>
</comment>
<comment type="similarity">
    <text evidence="1">Belongs to the Maf family.</text>
</comment>
<sequence length="196" mass="21730">MGTQLVLGSSSKIRKAVLEAFRIPFICVSSDFDERSITYSGDPFEYTRELAWNKANAVRSQGFSDSLIITADTVVVYEGEVFNKPESEEHAVEMLRTLSGTSHSVITSLVLMQNEKVASASETTQVSFIDIPPQHLKTYVQAFSSLKRCGGYCVQDGGGLIIKQIEGCVYNIQGLPIKTLNQLLMEFNISLWDYLA</sequence>
<evidence type="ECO:0000255" key="1">
    <source>
        <dbReference type="HAMAP-Rule" id="MF_00528"/>
    </source>
</evidence>
<feature type="chain" id="PRO_0000123008" description="Nucleoside triphosphate pyrophosphatase">
    <location>
        <begin position="1"/>
        <end position="196"/>
    </location>
</feature>
<feature type="active site" description="Proton acceptor" evidence="1">
    <location>
        <position position="72"/>
    </location>
</feature>
<accession>Q9PK45</accession>